<sequence>MKSDFVEVCILGKTVGLKGALKLHDRSDFPNQFKNGAKFYDINSKEFVIKSYDRNNNLVIFENYDSIDLAKTLVNYILYRSINDTIRDCKLAKDEFFYFDIIGCNVFEDKILLGEVIDILEVGAGFLFSIKTEGDLVKAGLNSNFYIPYNDNFTQNIDIKSKKIQVKNSLDILKNS</sequence>
<evidence type="ECO:0000255" key="1">
    <source>
        <dbReference type="HAMAP-Rule" id="MF_00014"/>
    </source>
</evidence>
<proteinExistence type="inferred from homology"/>
<gene>
    <name evidence="1" type="primary">rimM</name>
    <name type="ordered locus">CFF8240_1036</name>
</gene>
<keyword id="KW-0143">Chaperone</keyword>
<keyword id="KW-0963">Cytoplasm</keyword>
<keyword id="KW-0690">Ribosome biogenesis</keyword>
<keyword id="KW-0698">rRNA processing</keyword>
<comment type="function">
    <text evidence="1">An accessory protein needed during the final step in the assembly of 30S ribosomal subunit, possibly for assembly of the head region. Essential for efficient processing of 16S rRNA. May be needed both before and after RbfA during the maturation of 16S rRNA. It has affinity for free ribosomal 30S subunits but not for 70S ribosomes.</text>
</comment>
<comment type="subunit">
    <text evidence="1">Binds ribosomal protein uS19.</text>
</comment>
<comment type="subcellular location">
    <subcellularLocation>
        <location evidence="1">Cytoplasm</location>
    </subcellularLocation>
</comment>
<comment type="domain">
    <text evidence="1">The PRC barrel domain binds ribosomal protein uS19.</text>
</comment>
<comment type="similarity">
    <text evidence="1">Belongs to the RimM family.</text>
</comment>
<accession>A0RPR7</accession>
<dbReference type="EMBL" id="CP000487">
    <property type="protein sequence ID" value="ABK82195.1"/>
    <property type="molecule type" value="Genomic_DNA"/>
</dbReference>
<dbReference type="RefSeq" id="WP_002849602.1">
    <property type="nucleotide sequence ID" value="NC_008599.1"/>
</dbReference>
<dbReference type="SMR" id="A0RPR7"/>
<dbReference type="GeneID" id="61064864"/>
<dbReference type="KEGG" id="cff:CFF8240_1036"/>
<dbReference type="eggNOG" id="COG0806">
    <property type="taxonomic scope" value="Bacteria"/>
</dbReference>
<dbReference type="HOGENOM" id="CLU_077636_2_0_7"/>
<dbReference type="Proteomes" id="UP000000760">
    <property type="component" value="Chromosome"/>
</dbReference>
<dbReference type="GO" id="GO:0005737">
    <property type="term" value="C:cytoplasm"/>
    <property type="evidence" value="ECO:0007669"/>
    <property type="project" value="UniProtKB-SubCell"/>
</dbReference>
<dbReference type="GO" id="GO:0005840">
    <property type="term" value="C:ribosome"/>
    <property type="evidence" value="ECO:0007669"/>
    <property type="project" value="InterPro"/>
</dbReference>
<dbReference type="GO" id="GO:0043022">
    <property type="term" value="F:ribosome binding"/>
    <property type="evidence" value="ECO:0007669"/>
    <property type="project" value="InterPro"/>
</dbReference>
<dbReference type="GO" id="GO:0042274">
    <property type="term" value="P:ribosomal small subunit biogenesis"/>
    <property type="evidence" value="ECO:0007669"/>
    <property type="project" value="UniProtKB-UniRule"/>
</dbReference>
<dbReference type="GO" id="GO:0006364">
    <property type="term" value="P:rRNA processing"/>
    <property type="evidence" value="ECO:0007669"/>
    <property type="project" value="UniProtKB-UniRule"/>
</dbReference>
<dbReference type="Gene3D" id="2.30.30.240">
    <property type="entry name" value="PRC-barrel domain"/>
    <property type="match status" value="1"/>
</dbReference>
<dbReference type="Gene3D" id="2.40.30.60">
    <property type="entry name" value="RimM"/>
    <property type="match status" value="1"/>
</dbReference>
<dbReference type="HAMAP" id="MF_00014">
    <property type="entry name" value="Ribosome_mat_RimM"/>
    <property type="match status" value="1"/>
</dbReference>
<dbReference type="InterPro" id="IPR011033">
    <property type="entry name" value="PRC_barrel-like_sf"/>
</dbReference>
<dbReference type="InterPro" id="IPR056792">
    <property type="entry name" value="PRC_RimM"/>
</dbReference>
<dbReference type="InterPro" id="IPR011961">
    <property type="entry name" value="RimM"/>
</dbReference>
<dbReference type="InterPro" id="IPR002676">
    <property type="entry name" value="RimM_N"/>
</dbReference>
<dbReference type="InterPro" id="IPR036976">
    <property type="entry name" value="RimM_N_sf"/>
</dbReference>
<dbReference type="InterPro" id="IPR009000">
    <property type="entry name" value="Transl_B-barrel_sf"/>
</dbReference>
<dbReference type="NCBIfam" id="TIGR02273">
    <property type="entry name" value="16S_RimM"/>
    <property type="match status" value="1"/>
</dbReference>
<dbReference type="PANTHER" id="PTHR33692">
    <property type="entry name" value="RIBOSOME MATURATION FACTOR RIMM"/>
    <property type="match status" value="1"/>
</dbReference>
<dbReference type="PANTHER" id="PTHR33692:SF1">
    <property type="entry name" value="RIBOSOME MATURATION FACTOR RIMM"/>
    <property type="match status" value="1"/>
</dbReference>
<dbReference type="Pfam" id="PF24986">
    <property type="entry name" value="PRC_RimM"/>
    <property type="match status" value="1"/>
</dbReference>
<dbReference type="Pfam" id="PF01782">
    <property type="entry name" value="RimM"/>
    <property type="match status" value="1"/>
</dbReference>
<dbReference type="SUPFAM" id="SSF50346">
    <property type="entry name" value="PRC-barrel domain"/>
    <property type="match status" value="1"/>
</dbReference>
<dbReference type="SUPFAM" id="SSF50447">
    <property type="entry name" value="Translation proteins"/>
    <property type="match status" value="1"/>
</dbReference>
<name>RIMM_CAMFF</name>
<protein>
    <recommendedName>
        <fullName evidence="1">Ribosome maturation factor RimM</fullName>
    </recommendedName>
</protein>
<organism>
    <name type="scientific">Campylobacter fetus subsp. fetus (strain 82-40)</name>
    <dbReference type="NCBI Taxonomy" id="360106"/>
    <lineage>
        <taxon>Bacteria</taxon>
        <taxon>Pseudomonadati</taxon>
        <taxon>Campylobacterota</taxon>
        <taxon>Epsilonproteobacteria</taxon>
        <taxon>Campylobacterales</taxon>
        <taxon>Campylobacteraceae</taxon>
        <taxon>Campylobacter</taxon>
    </lineage>
</organism>
<feature type="chain" id="PRO_0000321719" description="Ribosome maturation factor RimM">
    <location>
        <begin position="1"/>
        <end position="176"/>
    </location>
</feature>
<feature type="domain" description="PRC barrel" evidence="1">
    <location>
        <begin position="93"/>
        <end position="172"/>
    </location>
</feature>
<reference key="1">
    <citation type="submission" date="2006-11" db="EMBL/GenBank/DDBJ databases">
        <title>Sequence of Campylobacter fetus subsp. fetus 82-40.</title>
        <authorList>
            <person name="Fouts D.E."/>
            <person name="Nelson K.E."/>
        </authorList>
    </citation>
    <scope>NUCLEOTIDE SEQUENCE [LARGE SCALE GENOMIC DNA]</scope>
    <source>
        <strain>82-40</strain>
    </source>
</reference>